<sequence length="431" mass="48935">MDETATSSEVTETFVSDPTTRQFEEDGHPPLETRHLNMIHEELEKLNISTDVINKMEVQLDLARADFRETQVQWSEKLKELSKQYSSQIAKARPFYELKIKERSLREESQKAAERFERATSILGIAKQQVSLTQESLSRQTSVLPECLEVLNHHIQRVREVEEERTAAESLHASKAHAMLHLAEKIRAMEKDNRYAIKKSRLYFEKRLEFTKILEAQKATILCLEAEVRQKKNDYTTSLRNLERISERIHEERSTGSLESAVSSDQEDQKSDFKSSESLPGNPPPYAPTAPPPYEDKYIIDKDDDSIVLNMIKTEQEEEGEKRNSRSLGSGVILLAQQLIGNGNSTEKHNITPPRHGEEADISYHTRPVGLSDGSDNSEVSSLASFNIGDDDTVSKMLMSHSELIKDIELATDRVGHILKPNIKSVSNAHE</sequence>
<proteinExistence type="evidence at protein level"/>
<accession>Q21194</accession>
<protein>
    <recommendedName>
        <fullName evidence="5">Guanine nucleotide exchange factor rei-2</fullName>
    </recommendedName>
</protein>
<name>REI2_CAEEL</name>
<gene>
    <name evidence="8" type="primary">rei-2</name>
    <name evidence="8" type="ORF">K03E6.7</name>
</gene>
<keyword id="KW-0131">Cell cycle</keyword>
<keyword id="KW-0132">Cell division</keyword>
<keyword id="KW-0175">Coiled coil</keyword>
<keyword id="KW-0342">GTP-binding</keyword>
<keyword id="KW-0547">Nucleotide-binding</keyword>
<keyword id="KW-1185">Reference proteome</keyword>
<organism evidence="7">
    <name type="scientific">Caenorhabditis elegans</name>
    <dbReference type="NCBI Taxonomy" id="6239"/>
    <lineage>
        <taxon>Eukaryota</taxon>
        <taxon>Metazoa</taxon>
        <taxon>Ecdysozoa</taxon>
        <taxon>Nematoda</taxon>
        <taxon>Chromadorea</taxon>
        <taxon>Rhabditida</taxon>
        <taxon>Rhabditina</taxon>
        <taxon>Rhabditomorpha</taxon>
        <taxon>Rhabditoidea</taxon>
        <taxon>Rhabditidae</taxon>
        <taxon>Peloderinae</taxon>
        <taxon>Caenorhabditis</taxon>
    </lineage>
</organism>
<evidence type="ECO:0000250" key="1">
    <source>
        <dbReference type="UniProtKB" id="P42171"/>
    </source>
</evidence>
<evidence type="ECO:0000255" key="2"/>
<evidence type="ECO:0000256" key="3">
    <source>
        <dbReference type="SAM" id="MobiDB-lite"/>
    </source>
</evidence>
<evidence type="ECO:0000269" key="4">
    <source>
    </source>
</evidence>
<evidence type="ECO:0000305" key="5"/>
<evidence type="ECO:0000312" key="6">
    <source>
        <dbReference type="EMBL" id="CCD62865.1"/>
    </source>
</evidence>
<evidence type="ECO:0000312" key="7">
    <source>
        <dbReference type="Proteomes" id="UP000001940"/>
    </source>
</evidence>
<evidence type="ECO:0000312" key="8">
    <source>
        <dbReference type="WormBase" id="K03E6.7"/>
    </source>
</evidence>
<dbReference type="EMBL" id="BX284606">
    <property type="protein sequence ID" value="CCD62865.1"/>
    <property type="molecule type" value="Genomic_DNA"/>
</dbReference>
<dbReference type="PIR" id="T34328">
    <property type="entry name" value="T34328"/>
</dbReference>
<dbReference type="RefSeq" id="NP_508206.2">
    <property type="nucleotide sequence ID" value="NM_075805.4"/>
</dbReference>
<dbReference type="SMR" id="Q21194"/>
<dbReference type="FunCoup" id="Q21194">
    <property type="interactions" value="1872"/>
</dbReference>
<dbReference type="STRING" id="6239.K03E6.7.1"/>
<dbReference type="PaxDb" id="6239-K03E6.7"/>
<dbReference type="PeptideAtlas" id="Q21194"/>
<dbReference type="EnsemblMetazoa" id="K03E6.7.1">
    <property type="protein sequence ID" value="K03E6.7.1"/>
    <property type="gene ID" value="WBGene00019365"/>
</dbReference>
<dbReference type="GeneID" id="180461"/>
<dbReference type="KEGG" id="cel:CELE_K03E6.7"/>
<dbReference type="UCSC" id="K03E6.7.1">
    <property type="organism name" value="c. elegans"/>
</dbReference>
<dbReference type="AGR" id="WB:WBGene00019365"/>
<dbReference type="CTD" id="180461"/>
<dbReference type="WormBase" id="K03E6.7">
    <property type="protein sequence ID" value="CE31197"/>
    <property type="gene ID" value="WBGene00019365"/>
    <property type="gene designation" value="rei-2"/>
</dbReference>
<dbReference type="eggNOG" id="KOG2008">
    <property type="taxonomic scope" value="Eukaryota"/>
</dbReference>
<dbReference type="GeneTree" id="ENSGT00390000018500"/>
<dbReference type="HOGENOM" id="CLU_649313_0_0_1"/>
<dbReference type="InParanoid" id="Q21194"/>
<dbReference type="OMA" id="ERIHEER"/>
<dbReference type="OrthoDB" id="446789at2759"/>
<dbReference type="PhylomeDB" id="Q21194"/>
<dbReference type="PRO" id="PR:Q21194"/>
<dbReference type="Proteomes" id="UP000001940">
    <property type="component" value="Chromosome X"/>
</dbReference>
<dbReference type="Bgee" id="WBGene00019365">
    <property type="expression patterns" value="Expressed in pharyngeal muscle cell (C elegans) and 3 other cell types or tissues"/>
</dbReference>
<dbReference type="GO" id="GO:0005737">
    <property type="term" value="C:cytoplasm"/>
    <property type="evidence" value="ECO:0000318"/>
    <property type="project" value="GO_Central"/>
</dbReference>
<dbReference type="GO" id="GO:0005525">
    <property type="term" value="F:GTP binding"/>
    <property type="evidence" value="ECO:0007669"/>
    <property type="project" value="UniProtKB-KW"/>
</dbReference>
<dbReference type="GO" id="GO:0004860">
    <property type="term" value="F:protein kinase inhibitor activity"/>
    <property type="evidence" value="ECO:0000318"/>
    <property type="project" value="GO_Central"/>
</dbReference>
<dbReference type="GO" id="GO:0051301">
    <property type="term" value="P:cell division"/>
    <property type="evidence" value="ECO:0007669"/>
    <property type="project" value="UniProtKB-KW"/>
</dbReference>
<dbReference type="GO" id="GO:0035556">
    <property type="term" value="P:intracellular signal transduction"/>
    <property type="evidence" value="ECO:0000318"/>
    <property type="project" value="GO_Central"/>
</dbReference>
<dbReference type="InterPro" id="IPR007940">
    <property type="entry name" value="SH3BP5"/>
</dbReference>
<dbReference type="PANTHER" id="PTHR19423">
    <property type="entry name" value="SH3 DOMAIN-BINDING PROTEIN 5"/>
    <property type="match status" value="1"/>
</dbReference>
<dbReference type="PANTHER" id="PTHR19423:SF1">
    <property type="entry name" value="SH3 DOMAIN-BINDING PROTEIN 5"/>
    <property type="match status" value="1"/>
</dbReference>
<dbReference type="Pfam" id="PF05276">
    <property type="entry name" value="SH3BP5"/>
    <property type="match status" value="1"/>
</dbReference>
<comment type="function">
    <text evidence="1 4">Guanine nucleotide exchange factor for Rab GTPase Rab-11.1 (By similarity). May spatially and temporally regulate the distribution of Rab-11.1 to target membranes during embryogenesis (PubMed:26506309). May play a role in cytokinesis, probably by targeting rab-11.1 to the cleavage furrows (PubMed:26506309).</text>
</comment>
<comment type="subunit">
    <text evidence="4">Interacts with rab-11.1. Binds preferentially to the GDP-bound form of rab-11.1.</text>
</comment>
<comment type="developmental stage">
    <text evidence="4">Expressed during embryogenesis.</text>
</comment>
<comment type="disruption phenotype">
    <text evidence="4">Viable. Double knockout with rei-1 results in a smaller brood size, weak embryonic lethality and severe mislocalization of rab-11.1 and prolonged cytokinesis in embryos.</text>
</comment>
<comment type="similarity">
    <text evidence="5">Belongs to the SH3BP5 family.</text>
</comment>
<feature type="chain" id="PRO_0000435467" description="Guanine nucleotide exchange factor rei-2" evidence="5">
    <location>
        <begin position="1"/>
        <end position="431"/>
    </location>
</feature>
<feature type="region of interest" description="Disordered" evidence="3">
    <location>
        <begin position="1"/>
        <end position="28"/>
    </location>
</feature>
<feature type="region of interest" description="Disordered" evidence="3">
    <location>
        <begin position="249"/>
        <end position="298"/>
    </location>
</feature>
<feature type="coiled-coil region" evidence="2">
    <location>
        <begin position="149"/>
        <end position="171"/>
    </location>
</feature>
<feature type="coiled-coil region" evidence="2">
    <location>
        <begin position="214"/>
        <end position="247"/>
    </location>
</feature>
<feature type="compositionally biased region" description="Polar residues" evidence="3">
    <location>
        <begin position="1"/>
        <end position="21"/>
    </location>
</feature>
<feature type="compositionally biased region" description="Polar residues" evidence="3">
    <location>
        <begin position="255"/>
        <end position="264"/>
    </location>
</feature>
<feature type="compositionally biased region" description="Pro residues" evidence="3">
    <location>
        <begin position="281"/>
        <end position="293"/>
    </location>
</feature>
<reference evidence="7" key="1">
    <citation type="journal article" date="1998" name="Science">
        <title>Genome sequence of the nematode C. elegans: a platform for investigating biology.</title>
        <authorList>
            <consortium name="The C. elegans sequencing consortium"/>
        </authorList>
    </citation>
    <scope>NUCLEOTIDE SEQUENCE [LARGE SCALE GENOMIC DNA]</scope>
    <source>
        <strain evidence="6 7">Bristol N2</strain>
    </source>
</reference>
<reference evidence="5" key="2">
    <citation type="journal article" date="2015" name="Dev. Cell">
        <title>REI-1 is a guanine nucleotide exchange factor regulating RAB-11 localization and function in C. elegans embryos.</title>
        <authorList>
            <person name="Sakaguchi A."/>
            <person name="Sato M."/>
            <person name="Sato K."/>
            <person name="Gengyo-Ando K."/>
            <person name="Yorimitsu T."/>
            <person name="Nakai J."/>
            <person name="Hara T."/>
            <person name="Sato K."/>
            <person name="Sato K."/>
        </authorList>
    </citation>
    <scope>FUNCTION</scope>
    <scope>INTERACTION WITH RAB-11.1</scope>
    <scope>DEVELOPMENTAL STAGE</scope>
    <scope>DISRUPTION PHENOTYPE</scope>
</reference>